<organismHost>
    <name type="scientific">Lactococcus lactis</name>
    <dbReference type="NCBI Taxonomy" id="1358"/>
</organismHost>
<name>HCP1_BPLP2</name>
<feature type="chain" id="PRO_0000438229" description="Probable head completion protein 1">
    <location>
        <begin position="1"/>
        <end position="104"/>
    </location>
</feature>
<comment type="function">
    <text evidence="4">Probable head completion protein that exhibits an open central channel for viral DNA ejection. Part of the head-tail connector by binding to the portal protein and to the head completion protein 2. Plays a role in morphogenesis of the virion capsid after genome packaging.</text>
</comment>
<comment type="subcellular location">
    <subcellularLocation>
        <location evidence="1">Virion</location>
    </subcellularLocation>
    <text evidence="1">Part of the connector between the portal and the tail.</text>
</comment>
<comment type="similarity">
    <text evidence="3">Belongs to the skunalikevirus head completion protein 1 family.</text>
</comment>
<proteinExistence type="evidence at protein level"/>
<evidence type="ECO:0000269" key="1">
    <source>
    </source>
</evidence>
<evidence type="ECO:0000303" key="2">
    <source>
    </source>
</evidence>
<evidence type="ECO:0000305" key="3"/>
<evidence type="ECO:0000305" key="4">
    <source>
    </source>
</evidence>
<accession>D3WAC7</accession>
<dbReference type="EMBL" id="GQ979703">
    <property type="protein sequence ID" value="ADC80084.1"/>
    <property type="molecule type" value="Genomic_DNA"/>
</dbReference>
<dbReference type="RefSeq" id="YP_009613488.1">
    <property type="nucleotide sequence ID" value="NC_042024.1"/>
</dbReference>
<dbReference type="GeneID" id="40089863"/>
<dbReference type="Proteomes" id="UP000002348">
    <property type="component" value="Segment"/>
</dbReference>
<dbReference type="GO" id="GO:0044423">
    <property type="term" value="C:virion component"/>
    <property type="evidence" value="ECO:0007669"/>
    <property type="project" value="UniProtKB-KW"/>
</dbReference>
<dbReference type="GO" id="GO:0099001">
    <property type="term" value="P:symbiont genome ejection through host cell envelope, long flexible tail mechanism"/>
    <property type="evidence" value="ECO:0007669"/>
    <property type="project" value="UniProtKB-KW"/>
</dbReference>
<organism>
    <name type="scientific">Lactococcus phage p2</name>
    <name type="common">Lactococcus lactis bacteriophage p2</name>
    <dbReference type="NCBI Taxonomy" id="254252"/>
    <lineage>
        <taxon>Viruses</taxon>
        <taxon>Duplodnaviria</taxon>
        <taxon>Heunggongvirae</taxon>
        <taxon>Uroviricota</taxon>
        <taxon>Caudoviricetes</taxon>
        <taxon>Skunavirus</taxon>
    </lineage>
</organism>
<sequence length="104" mass="11936">MIFSQVTLQVEKTVKKKNGAEDNVIKPITLPAVKQRISQSRLDEFSMIGLGKNVRYELNGIGEMEDLIFNYFLDEKGETFKRTTWERNPKNNKMILEGLVSNGI</sequence>
<protein>
    <recommendedName>
        <fullName evidence="2">Probable head completion protein 1</fullName>
        <shortName>HCP1</shortName>
    </recommendedName>
    <alternativeName>
        <fullName>Connector protein gp8</fullName>
    </alternativeName>
</protein>
<keyword id="KW-0118">Viral capsid assembly</keyword>
<keyword id="KW-1171">Viral genome ejection through host cell envelope</keyword>
<keyword id="KW-1243">Viral long flexible tail ejection system</keyword>
<keyword id="KW-1162">Viral penetration into host cytoplasm</keyword>
<keyword id="KW-1188">Viral release from host cell</keyword>
<keyword id="KW-0946">Virion</keyword>
<keyword id="KW-1160">Virus entry into host cell</keyword>
<reference key="1">
    <citation type="submission" date="2010-02" db="EMBL/GenBank/DDBJ databases">
        <title>Complete genomic sequence of Lactococcus lactis phage p2.</title>
        <authorList>
            <person name="Tremblay D.M."/>
            <person name="Deveau H."/>
            <person name="Moineau S."/>
        </authorList>
    </citation>
    <scope>NUCLEOTIDE SEQUENCE [LARGE SCALE GENOMIC DNA]</scope>
</reference>
<reference key="2">
    <citation type="journal article" date="2013" name="J. Virol.">
        <title>Structure, adsorption to host, and infection mechanism of virulent lactococcal phage p2.</title>
        <authorList>
            <person name="Bebeacua C."/>
            <person name="Tremblay D."/>
            <person name="Farenc C."/>
            <person name="Chapot-Chartier M.P."/>
            <person name="Sadovskaya I."/>
            <person name="van Heel M."/>
            <person name="Veesler D."/>
            <person name="Moineau S."/>
            <person name="Cambillau C."/>
        </authorList>
    </citation>
    <scope>STRUCTURE BY ELECTRON MICROSCOPY (21 ANGSTROMS) OF THE CONNECTOR</scope>
    <scope>FUNCTION</scope>
    <scope>SUBCELLULAR LOCATION</scope>
</reference>